<comment type="function">
    <text evidence="1">Binds to 23S rRNA. Forms part of two intersubunit bridges in the 70S ribosome.</text>
</comment>
<comment type="subunit">
    <text evidence="1">Part of the 50S ribosomal subunit. Forms a cluster with proteins L3 and L19. In the 70S ribosome, L14 and L19 interact and together make contacts with the 16S rRNA in bridges B5 and B8.</text>
</comment>
<comment type="similarity">
    <text evidence="1">Belongs to the universal ribosomal protein uL14 family.</text>
</comment>
<feature type="chain" id="PRO_0000355816" description="Large ribosomal subunit protein uL14">
    <location>
        <begin position="1"/>
        <end position="119"/>
    </location>
</feature>
<accession>Q5FFV0</accession>
<organism>
    <name type="scientific">Ehrlichia ruminantium (strain Gardel)</name>
    <dbReference type="NCBI Taxonomy" id="302409"/>
    <lineage>
        <taxon>Bacteria</taxon>
        <taxon>Pseudomonadati</taxon>
        <taxon>Pseudomonadota</taxon>
        <taxon>Alphaproteobacteria</taxon>
        <taxon>Rickettsiales</taxon>
        <taxon>Anaplasmataceae</taxon>
        <taxon>Ehrlichia</taxon>
    </lineage>
</organism>
<gene>
    <name evidence="1" type="primary">rplN</name>
    <name type="ordered locus">ERGA_CDS_06190</name>
</gene>
<proteinExistence type="inferred from homology"/>
<keyword id="KW-0687">Ribonucleoprotein</keyword>
<keyword id="KW-0689">Ribosomal protein</keyword>
<keyword id="KW-0694">RNA-binding</keyword>
<keyword id="KW-0699">rRNA-binding</keyword>
<protein>
    <recommendedName>
        <fullName evidence="1">Large ribosomal subunit protein uL14</fullName>
    </recommendedName>
    <alternativeName>
        <fullName evidence="2">50S ribosomal protein L14</fullName>
    </alternativeName>
</protein>
<dbReference type="EMBL" id="CR925677">
    <property type="protein sequence ID" value="CAI28071.1"/>
    <property type="molecule type" value="Genomic_DNA"/>
</dbReference>
<dbReference type="RefSeq" id="WP_011155279.1">
    <property type="nucleotide sequence ID" value="NC_006831.1"/>
</dbReference>
<dbReference type="SMR" id="Q5FFV0"/>
<dbReference type="GeneID" id="33058340"/>
<dbReference type="KEGG" id="erg:ERGA_CDS_06190"/>
<dbReference type="HOGENOM" id="CLU_095071_2_2_5"/>
<dbReference type="OrthoDB" id="9806379at2"/>
<dbReference type="Proteomes" id="UP000000533">
    <property type="component" value="Chromosome"/>
</dbReference>
<dbReference type="GO" id="GO:0022625">
    <property type="term" value="C:cytosolic large ribosomal subunit"/>
    <property type="evidence" value="ECO:0007669"/>
    <property type="project" value="TreeGrafter"/>
</dbReference>
<dbReference type="GO" id="GO:0070180">
    <property type="term" value="F:large ribosomal subunit rRNA binding"/>
    <property type="evidence" value="ECO:0007669"/>
    <property type="project" value="TreeGrafter"/>
</dbReference>
<dbReference type="GO" id="GO:0003735">
    <property type="term" value="F:structural constituent of ribosome"/>
    <property type="evidence" value="ECO:0007669"/>
    <property type="project" value="InterPro"/>
</dbReference>
<dbReference type="GO" id="GO:0006412">
    <property type="term" value="P:translation"/>
    <property type="evidence" value="ECO:0007669"/>
    <property type="project" value="UniProtKB-UniRule"/>
</dbReference>
<dbReference type="CDD" id="cd00337">
    <property type="entry name" value="Ribosomal_uL14"/>
    <property type="match status" value="1"/>
</dbReference>
<dbReference type="Gene3D" id="2.40.150.20">
    <property type="entry name" value="Ribosomal protein L14"/>
    <property type="match status" value="1"/>
</dbReference>
<dbReference type="HAMAP" id="MF_01367">
    <property type="entry name" value="Ribosomal_uL14"/>
    <property type="match status" value="1"/>
</dbReference>
<dbReference type="InterPro" id="IPR000218">
    <property type="entry name" value="Ribosomal_uL14"/>
</dbReference>
<dbReference type="InterPro" id="IPR005745">
    <property type="entry name" value="Ribosomal_uL14_bac-type"/>
</dbReference>
<dbReference type="InterPro" id="IPR019972">
    <property type="entry name" value="Ribosomal_uL14_CS"/>
</dbReference>
<dbReference type="InterPro" id="IPR036853">
    <property type="entry name" value="Ribosomal_uL14_sf"/>
</dbReference>
<dbReference type="NCBIfam" id="TIGR01067">
    <property type="entry name" value="rplN_bact"/>
    <property type="match status" value="1"/>
</dbReference>
<dbReference type="PANTHER" id="PTHR11761">
    <property type="entry name" value="50S/60S RIBOSOMAL PROTEIN L14/L23"/>
    <property type="match status" value="1"/>
</dbReference>
<dbReference type="PANTHER" id="PTHR11761:SF3">
    <property type="entry name" value="LARGE RIBOSOMAL SUBUNIT PROTEIN UL14M"/>
    <property type="match status" value="1"/>
</dbReference>
<dbReference type="Pfam" id="PF00238">
    <property type="entry name" value="Ribosomal_L14"/>
    <property type="match status" value="1"/>
</dbReference>
<dbReference type="SMART" id="SM01374">
    <property type="entry name" value="Ribosomal_L14"/>
    <property type="match status" value="1"/>
</dbReference>
<dbReference type="SUPFAM" id="SSF50193">
    <property type="entry name" value="Ribosomal protein L14"/>
    <property type="match status" value="1"/>
</dbReference>
<dbReference type="PROSITE" id="PS00049">
    <property type="entry name" value="RIBOSOMAL_L14"/>
    <property type="match status" value="1"/>
</dbReference>
<name>RL14_EHRRG</name>
<evidence type="ECO:0000255" key="1">
    <source>
        <dbReference type="HAMAP-Rule" id="MF_01367"/>
    </source>
</evidence>
<evidence type="ECO:0000305" key="2"/>
<reference key="1">
    <citation type="journal article" date="2006" name="J. Bacteriol.">
        <title>Comparative genomic analysis of three strains of Ehrlichia ruminantium reveals an active process of genome size plasticity.</title>
        <authorList>
            <person name="Frutos R."/>
            <person name="Viari A."/>
            <person name="Ferraz C."/>
            <person name="Morgat A."/>
            <person name="Eychenie S."/>
            <person name="Kandassamy Y."/>
            <person name="Chantal I."/>
            <person name="Bensaid A."/>
            <person name="Coissac E."/>
            <person name="Vachiery N."/>
            <person name="Demaille J."/>
            <person name="Martinez D."/>
        </authorList>
    </citation>
    <scope>NUCLEOTIDE SEQUENCE [LARGE SCALE GENOMIC DNA]</scope>
    <source>
        <strain>Gardel</strain>
    </source>
</reference>
<sequence>MIQKNTLLDVADNSGARKVLCIGLLNGKKSASVGDVIVVSTKVVIPRGKVSKGKVYKAVIVRVKKAVRRLDGSVIKFSSNAVVLINDQGDPLGTRVFGPVKKLPFGLFSKVMSLAVEVL</sequence>